<accession>B4IBX2</accession>
<keyword id="KW-0217">Developmental protein</keyword>
<keyword id="KW-1015">Disulfide bond</keyword>
<keyword id="KW-1185">Reference proteome</keyword>
<keyword id="KW-0964">Secreted</keyword>
<keyword id="KW-0732">Signal</keyword>
<reference evidence="4" key="1">
    <citation type="journal article" date="2007" name="Nature">
        <title>Evolution of genes and genomes on the Drosophila phylogeny.</title>
        <authorList>
            <consortium name="Drosophila 12 genomes consortium"/>
        </authorList>
    </citation>
    <scope>NUCLEOTIDE SEQUENCE [LARGE SCALE GENOMIC DNA]</scope>
    <source>
        <strain evidence="4">Rob3c / Tucson 14021-0248.25</strain>
    </source>
</reference>
<name>ARMET_DROSE</name>
<organism>
    <name type="scientific">Drosophila sechellia</name>
    <name type="common">Fruit fly</name>
    <dbReference type="NCBI Taxonomy" id="7238"/>
    <lineage>
        <taxon>Eukaryota</taxon>
        <taxon>Metazoa</taxon>
        <taxon>Ecdysozoa</taxon>
        <taxon>Arthropoda</taxon>
        <taxon>Hexapoda</taxon>
        <taxon>Insecta</taxon>
        <taxon>Pterygota</taxon>
        <taxon>Neoptera</taxon>
        <taxon>Endopterygota</taxon>
        <taxon>Diptera</taxon>
        <taxon>Brachycera</taxon>
        <taxon>Muscomorpha</taxon>
        <taxon>Ephydroidea</taxon>
        <taxon>Drosophilidae</taxon>
        <taxon>Drosophila</taxon>
        <taxon>Sophophora</taxon>
    </lineage>
</organism>
<proteinExistence type="inferred from homology"/>
<dbReference type="EMBL" id="CH480827">
    <property type="protein sequence ID" value="EDW44880.1"/>
    <property type="molecule type" value="Genomic_DNA"/>
</dbReference>
<dbReference type="SMR" id="B4IBX2"/>
<dbReference type="STRING" id="7238.B4IBX2"/>
<dbReference type="EnsemblMetazoa" id="FBtr0198136">
    <property type="protein sequence ID" value="FBpp0196628"/>
    <property type="gene ID" value="FBgn0170071"/>
</dbReference>
<dbReference type="EnsemblMetazoa" id="XM_002041196.2">
    <property type="protein sequence ID" value="XP_002041232.1"/>
    <property type="gene ID" value="LOC6616898"/>
</dbReference>
<dbReference type="GeneID" id="6616898"/>
<dbReference type="KEGG" id="dse:6616898"/>
<dbReference type="CTD" id="7873"/>
<dbReference type="HOGENOM" id="CLU_099080_1_0_1"/>
<dbReference type="OMA" id="WSMPADK"/>
<dbReference type="OrthoDB" id="41766at7215"/>
<dbReference type="PhylomeDB" id="B4IBX2"/>
<dbReference type="ChiTaRS" id="Manf">
    <property type="organism name" value="fly"/>
</dbReference>
<dbReference type="Proteomes" id="UP000001292">
    <property type="component" value="Unassembled WGS sequence"/>
</dbReference>
<dbReference type="GO" id="GO:0005783">
    <property type="term" value="C:endoplasmic reticulum"/>
    <property type="evidence" value="ECO:0007669"/>
    <property type="project" value="EnsemblMetazoa"/>
</dbReference>
<dbReference type="GO" id="GO:0005615">
    <property type="term" value="C:extracellular space"/>
    <property type="evidence" value="ECO:0007669"/>
    <property type="project" value="TreeGrafter"/>
</dbReference>
<dbReference type="GO" id="GO:0045202">
    <property type="term" value="C:synapse"/>
    <property type="evidence" value="ECO:0007669"/>
    <property type="project" value="GOC"/>
</dbReference>
<dbReference type="GO" id="GO:0042417">
    <property type="term" value="P:dopamine metabolic process"/>
    <property type="evidence" value="ECO:0007669"/>
    <property type="project" value="EnsemblMetazoa"/>
</dbReference>
<dbReference type="GO" id="GO:0071542">
    <property type="term" value="P:dopaminergic neuron differentiation"/>
    <property type="evidence" value="ECO:0007669"/>
    <property type="project" value="TreeGrafter"/>
</dbReference>
<dbReference type="GO" id="GO:0070050">
    <property type="term" value="P:neuron cellular homeostasis"/>
    <property type="evidence" value="ECO:0007669"/>
    <property type="project" value="EnsemblMetazoa"/>
</dbReference>
<dbReference type="GO" id="GO:0031175">
    <property type="term" value="P:neuron projection development"/>
    <property type="evidence" value="ECO:0007669"/>
    <property type="project" value="EnsemblMetazoa"/>
</dbReference>
<dbReference type="GO" id="GO:0001963">
    <property type="term" value="P:synaptic transmission, dopaminergic"/>
    <property type="evidence" value="ECO:0007669"/>
    <property type="project" value="EnsemblMetazoa"/>
</dbReference>
<dbReference type="FunFam" id="1.10.225.10:FF:000003">
    <property type="entry name" value="Mesencephalic astrocyte-derived neurotrophic factor"/>
    <property type="match status" value="1"/>
</dbReference>
<dbReference type="FunFam" id="1.10.720.30:FF:000003">
    <property type="entry name" value="Mesencephalic astrocyte-derived neurotrophic factor"/>
    <property type="match status" value="1"/>
</dbReference>
<dbReference type="Gene3D" id="1.10.720.30">
    <property type="entry name" value="SAP domain"/>
    <property type="match status" value="1"/>
</dbReference>
<dbReference type="Gene3D" id="1.10.225.10">
    <property type="entry name" value="Saposin-like"/>
    <property type="match status" value="1"/>
</dbReference>
<dbReference type="InterPro" id="IPR045333">
    <property type="entry name" value="ARMET-like"/>
</dbReference>
<dbReference type="InterPro" id="IPR019345">
    <property type="entry name" value="ARMET_C"/>
</dbReference>
<dbReference type="InterPro" id="IPR045332">
    <property type="entry name" value="ARMET_N"/>
</dbReference>
<dbReference type="InterPro" id="IPR018247">
    <property type="entry name" value="EF_Hand_1_Ca_BS"/>
</dbReference>
<dbReference type="InterPro" id="IPR036361">
    <property type="entry name" value="SAP_dom_sf"/>
</dbReference>
<dbReference type="PANTHER" id="PTHR12990">
    <property type="entry name" value="ARMET-LIKE PROTEIN"/>
    <property type="match status" value="1"/>
</dbReference>
<dbReference type="PANTHER" id="PTHR12990:SF5">
    <property type="entry name" value="MESENCEPHALIC ASTROCYTE-DERIVED NEUROTROPHIC FACTOR HOMOLOG"/>
    <property type="match status" value="1"/>
</dbReference>
<dbReference type="Pfam" id="PF10208">
    <property type="entry name" value="ARMET_C"/>
    <property type="match status" value="1"/>
</dbReference>
<dbReference type="Pfam" id="PF20145">
    <property type="entry name" value="ARMET_N"/>
    <property type="match status" value="1"/>
</dbReference>
<dbReference type="SUPFAM" id="SSF68906">
    <property type="entry name" value="SAP domain"/>
    <property type="match status" value="1"/>
</dbReference>
<protein>
    <recommendedName>
        <fullName>Mesencephalic astrocyte-derived neurotrophic factor homolog</fullName>
    </recommendedName>
    <alternativeName>
        <fullName>MANF/CDNF-like protein</fullName>
    </alternativeName>
</protein>
<comment type="function">
    <text evidence="2">Required during the maturation of the embryonic nervous system for maintenance of neuronal and cuticular connectivity. Essential for maintenance of dopaminergic neurons and dopamine levels (By similarity).</text>
</comment>
<comment type="subcellular location">
    <subcellularLocation>
        <location evidence="2">Secreted</location>
    </subcellularLocation>
</comment>
<comment type="similarity">
    <text evidence="3">Belongs to the ARMET family.</text>
</comment>
<sequence length="173" mass="20168">MKTWHMVVVIGFLATLAQTSLALKEEDCEVCVKTVRRFADSLDDSTKKDYKQIETVFKKFCKTQKNKEHRFCYYLGGLEESATGILNELSKPLSWSMPAEKICEKLKKKDAQICDLRYEKQIDLNSVDLKKLKVRDLKKILNDWDESCDGCLEKGDFIKRIEELKPKYSRSEL</sequence>
<gene>
    <name evidence="2" type="primary">Manf</name>
    <name type="ORF">GM15151</name>
</gene>
<feature type="signal peptide" evidence="3">
    <location>
        <begin position="1"/>
        <end position="22"/>
    </location>
</feature>
<feature type="chain" id="PRO_0000390944" description="Mesencephalic astrocyte-derived neurotrophic factor homolog">
    <location>
        <begin position="23"/>
        <end position="173"/>
    </location>
</feature>
<feature type="disulfide bond" evidence="1">
    <location>
        <begin position="28"/>
        <end position="114"/>
    </location>
</feature>
<feature type="disulfide bond" evidence="1">
    <location>
        <begin position="31"/>
        <end position="103"/>
    </location>
</feature>
<feature type="disulfide bond" evidence="1">
    <location>
        <begin position="61"/>
        <end position="72"/>
    </location>
</feature>
<feature type="disulfide bond" evidence="1">
    <location>
        <begin position="148"/>
        <end position="151"/>
    </location>
</feature>
<evidence type="ECO:0000250" key="1">
    <source>
        <dbReference type="UniProtKB" id="P55145"/>
    </source>
</evidence>
<evidence type="ECO:0000250" key="2">
    <source>
        <dbReference type="UniProtKB" id="Q9XZ63"/>
    </source>
</evidence>
<evidence type="ECO:0000255" key="3"/>
<evidence type="ECO:0000312" key="4">
    <source>
        <dbReference type="EMBL" id="EDW44880.1"/>
    </source>
</evidence>